<protein>
    <recommendedName>
        <fullName evidence="1">Urease accessory protein UreE</fullName>
    </recommendedName>
</protein>
<keyword id="KW-0143">Chaperone</keyword>
<keyword id="KW-0963">Cytoplasm</keyword>
<keyword id="KW-0533">Nickel</keyword>
<keyword id="KW-0996">Nickel insertion</keyword>
<proteinExistence type="inferred from homology"/>
<comment type="function">
    <text evidence="1">Involved in urease metallocenter assembly. Binds nickel. Probably functions as a nickel donor during metallocenter assembly.</text>
</comment>
<comment type="subcellular location">
    <subcellularLocation>
        <location evidence="1">Cytoplasm</location>
    </subcellularLocation>
</comment>
<comment type="similarity">
    <text evidence="1">Belongs to the UreE family.</text>
</comment>
<feature type="chain" id="PRO_1000062570" description="Urease accessory protein UreE">
    <location>
        <begin position="1"/>
        <end position="231"/>
    </location>
</feature>
<feature type="region of interest" description="Disordered" evidence="2">
    <location>
        <begin position="185"/>
        <end position="231"/>
    </location>
</feature>
<feature type="compositionally biased region" description="Basic and acidic residues" evidence="2">
    <location>
        <begin position="203"/>
        <end position="231"/>
    </location>
</feature>
<gene>
    <name evidence="1" type="primary">ureE</name>
    <name type="ordered locus">YPDSF_1608</name>
</gene>
<sequence length="231" mass="25948">MILIEHILGNVKKDPVWREKLKDATFDLLILDQREAQKSRCRKSSTQGLDLGISLDRNVVLADGDVLAWDEETNVAVVVQINLRDVMVIDLSELKSRSPDELIKTCFELGHALGNQHWKAVTKHNEVYVPLTVATTMMDSVMRTHGFQHLPFRFVKGAEILPLLTNSEARLLFGGAEDTDTHVHVASPLDEPHGSGLHIHGIHSHEEGHSHGDHDHDHSHSHGDHDHDHKH</sequence>
<name>UREE_YERPP</name>
<accession>A4TL31</accession>
<organism>
    <name type="scientific">Yersinia pestis (strain Pestoides F)</name>
    <dbReference type="NCBI Taxonomy" id="386656"/>
    <lineage>
        <taxon>Bacteria</taxon>
        <taxon>Pseudomonadati</taxon>
        <taxon>Pseudomonadota</taxon>
        <taxon>Gammaproteobacteria</taxon>
        <taxon>Enterobacterales</taxon>
        <taxon>Yersiniaceae</taxon>
        <taxon>Yersinia</taxon>
    </lineage>
</organism>
<dbReference type="EMBL" id="CP000668">
    <property type="protein sequence ID" value="ABP39993.1"/>
    <property type="molecule type" value="Genomic_DNA"/>
</dbReference>
<dbReference type="RefSeq" id="WP_002212230.1">
    <property type="nucleotide sequence ID" value="NZ_CP009715.1"/>
</dbReference>
<dbReference type="SMR" id="A4TL31"/>
<dbReference type="GeneID" id="57976026"/>
<dbReference type="KEGG" id="ypp:YPDSF_1608"/>
<dbReference type="PATRIC" id="fig|386656.14.peg.2159"/>
<dbReference type="GO" id="GO:0005737">
    <property type="term" value="C:cytoplasm"/>
    <property type="evidence" value="ECO:0007669"/>
    <property type="project" value="UniProtKB-SubCell"/>
</dbReference>
<dbReference type="GO" id="GO:0016151">
    <property type="term" value="F:nickel cation binding"/>
    <property type="evidence" value="ECO:0007669"/>
    <property type="project" value="UniProtKB-UniRule"/>
</dbReference>
<dbReference type="GO" id="GO:0051082">
    <property type="term" value="F:unfolded protein binding"/>
    <property type="evidence" value="ECO:0007669"/>
    <property type="project" value="UniProtKB-UniRule"/>
</dbReference>
<dbReference type="GO" id="GO:0006457">
    <property type="term" value="P:protein folding"/>
    <property type="evidence" value="ECO:0007669"/>
    <property type="project" value="InterPro"/>
</dbReference>
<dbReference type="CDD" id="cd00571">
    <property type="entry name" value="UreE"/>
    <property type="match status" value="1"/>
</dbReference>
<dbReference type="Gene3D" id="2.60.260.20">
    <property type="entry name" value="Urease metallochaperone UreE, N-terminal domain"/>
    <property type="match status" value="1"/>
</dbReference>
<dbReference type="HAMAP" id="MF_00822">
    <property type="entry name" value="UreE"/>
    <property type="match status" value="1"/>
</dbReference>
<dbReference type="InterPro" id="IPR012406">
    <property type="entry name" value="UreE"/>
</dbReference>
<dbReference type="InterPro" id="IPR004029">
    <property type="entry name" value="UreE_N"/>
</dbReference>
<dbReference type="InterPro" id="IPR036118">
    <property type="entry name" value="UreE_N_sf"/>
</dbReference>
<dbReference type="NCBIfam" id="NF009761">
    <property type="entry name" value="PRK13262.1"/>
    <property type="match status" value="1"/>
</dbReference>
<dbReference type="Pfam" id="PF02814">
    <property type="entry name" value="UreE_N"/>
    <property type="match status" value="1"/>
</dbReference>
<dbReference type="SMART" id="SM00988">
    <property type="entry name" value="UreE_N"/>
    <property type="match status" value="1"/>
</dbReference>
<dbReference type="SUPFAM" id="SSF69287">
    <property type="entry name" value="Urease metallochaperone UreE, N-terminal domain"/>
    <property type="match status" value="1"/>
</dbReference>
<reference key="1">
    <citation type="submission" date="2007-02" db="EMBL/GenBank/DDBJ databases">
        <title>Complete sequence of chromosome of Yersinia pestis Pestoides F.</title>
        <authorList>
            <consortium name="US DOE Joint Genome Institute"/>
            <person name="Copeland A."/>
            <person name="Lucas S."/>
            <person name="Lapidus A."/>
            <person name="Barry K."/>
            <person name="Detter J.C."/>
            <person name="Glavina del Rio T."/>
            <person name="Hammon N."/>
            <person name="Israni S."/>
            <person name="Dalin E."/>
            <person name="Tice H."/>
            <person name="Pitluck S."/>
            <person name="Di Bartolo G."/>
            <person name="Chain P."/>
            <person name="Malfatti S."/>
            <person name="Shin M."/>
            <person name="Vergez L."/>
            <person name="Schmutz J."/>
            <person name="Larimer F."/>
            <person name="Land M."/>
            <person name="Hauser L."/>
            <person name="Worsham P."/>
            <person name="Chu M."/>
            <person name="Bearden S."/>
            <person name="Garcia E."/>
            <person name="Richardson P."/>
        </authorList>
    </citation>
    <scope>NUCLEOTIDE SEQUENCE [LARGE SCALE GENOMIC DNA]</scope>
    <source>
        <strain>Pestoides F</strain>
    </source>
</reference>
<evidence type="ECO:0000255" key="1">
    <source>
        <dbReference type="HAMAP-Rule" id="MF_00822"/>
    </source>
</evidence>
<evidence type="ECO:0000256" key="2">
    <source>
        <dbReference type="SAM" id="MobiDB-lite"/>
    </source>
</evidence>